<sequence length="442" mass="50295">MPENSPETMTRNRSIFLLSLGCSKNTVDSERLIGQARRKGLSFTNEPDEADIVIINTCGFIADAKTESIDEILAAAEKRKNGEIEALYVMGCLSALYAAELRAELPEVDRFFGTADLPEILNILGTAYDPATRFERSLLSPSHYAWLKLSEGCSRTCSFCAIPKMRGRYKSESMEDLLQEATRLKAKGVKELNLIAQDITPYGLDLYGTSRLNDLMRELSDLNFDWIRLLYAYPLDFPLEVIDTMRERENICDYLDMPVQHICDRILASMKRGIDKQGTIGLLESIRKRNPNIRLRTTMIVGYPGETRAEFEELLQFVREFRFDRLGCFPYSHEEHTAAYDNLEDDIPEEEKQERVGELMELQEGISEKKNRALEEKALKVLVEEVEDNLAFARTEYDAPEVDNECVLDTAGIDIRPGDFCMATIEESSAYELVGRIKNVIP</sequence>
<keyword id="KW-0004">4Fe-4S</keyword>
<keyword id="KW-0963">Cytoplasm</keyword>
<keyword id="KW-0408">Iron</keyword>
<keyword id="KW-0411">Iron-sulfur</keyword>
<keyword id="KW-0479">Metal-binding</keyword>
<keyword id="KW-0949">S-adenosyl-L-methionine</keyword>
<keyword id="KW-0808">Transferase</keyword>
<evidence type="ECO:0000255" key="1">
    <source>
        <dbReference type="HAMAP-Rule" id="MF_01865"/>
    </source>
</evidence>
<evidence type="ECO:0000255" key="2">
    <source>
        <dbReference type="PROSITE-ProRule" id="PRU01266"/>
    </source>
</evidence>
<accession>B3EPX5</accession>
<dbReference type="EC" id="2.8.4.4" evidence="1"/>
<dbReference type="EMBL" id="CP001101">
    <property type="protein sequence ID" value="ACE03907.1"/>
    <property type="molecule type" value="Genomic_DNA"/>
</dbReference>
<dbReference type="SMR" id="B3EPX5"/>
<dbReference type="STRING" id="331678.Cphamn1_0963"/>
<dbReference type="KEGG" id="cpb:Cphamn1_0963"/>
<dbReference type="eggNOG" id="COG0621">
    <property type="taxonomic scope" value="Bacteria"/>
</dbReference>
<dbReference type="HOGENOM" id="CLU_018697_0_1_10"/>
<dbReference type="OrthoDB" id="9805215at2"/>
<dbReference type="GO" id="GO:0005829">
    <property type="term" value="C:cytosol"/>
    <property type="evidence" value="ECO:0007669"/>
    <property type="project" value="TreeGrafter"/>
</dbReference>
<dbReference type="GO" id="GO:0051539">
    <property type="term" value="F:4 iron, 4 sulfur cluster binding"/>
    <property type="evidence" value="ECO:0007669"/>
    <property type="project" value="UniProtKB-UniRule"/>
</dbReference>
<dbReference type="GO" id="GO:0035599">
    <property type="term" value="F:aspartic acid methylthiotransferase activity"/>
    <property type="evidence" value="ECO:0007669"/>
    <property type="project" value="TreeGrafter"/>
</dbReference>
<dbReference type="GO" id="GO:0046872">
    <property type="term" value="F:metal ion binding"/>
    <property type="evidence" value="ECO:0007669"/>
    <property type="project" value="UniProtKB-KW"/>
</dbReference>
<dbReference type="GO" id="GO:0103039">
    <property type="term" value="F:protein methylthiotransferase activity"/>
    <property type="evidence" value="ECO:0007669"/>
    <property type="project" value="UniProtKB-EC"/>
</dbReference>
<dbReference type="GO" id="GO:0006400">
    <property type="term" value="P:tRNA modification"/>
    <property type="evidence" value="ECO:0007669"/>
    <property type="project" value="InterPro"/>
</dbReference>
<dbReference type="CDD" id="cd01335">
    <property type="entry name" value="Radical_SAM"/>
    <property type="match status" value="1"/>
</dbReference>
<dbReference type="FunFam" id="3.80.30.20:FF:000001">
    <property type="entry name" value="tRNA-2-methylthio-N(6)-dimethylallyladenosine synthase 2"/>
    <property type="match status" value="1"/>
</dbReference>
<dbReference type="Gene3D" id="3.40.50.12160">
    <property type="entry name" value="Methylthiotransferase, N-terminal domain"/>
    <property type="match status" value="1"/>
</dbReference>
<dbReference type="Gene3D" id="2.40.50.140">
    <property type="entry name" value="Nucleic acid-binding proteins"/>
    <property type="match status" value="1"/>
</dbReference>
<dbReference type="Gene3D" id="3.80.30.20">
    <property type="entry name" value="tm_1862 like domain"/>
    <property type="match status" value="1"/>
</dbReference>
<dbReference type="HAMAP" id="MF_01865">
    <property type="entry name" value="MTTase_RimO"/>
    <property type="match status" value="1"/>
</dbReference>
<dbReference type="InterPro" id="IPR006638">
    <property type="entry name" value="Elp3/MiaA/NifB-like_rSAM"/>
</dbReference>
<dbReference type="InterPro" id="IPR005839">
    <property type="entry name" value="Methylthiotransferase"/>
</dbReference>
<dbReference type="InterPro" id="IPR020612">
    <property type="entry name" value="Methylthiotransferase_CS"/>
</dbReference>
<dbReference type="InterPro" id="IPR013848">
    <property type="entry name" value="Methylthiotransferase_N"/>
</dbReference>
<dbReference type="InterPro" id="IPR038135">
    <property type="entry name" value="Methylthiotransferase_N_sf"/>
</dbReference>
<dbReference type="InterPro" id="IPR012340">
    <property type="entry name" value="NA-bd_OB-fold"/>
</dbReference>
<dbReference type="InterPro" id="IPR005840">
    <property type="entry name" value="Ribosomal_uS12_MeSTrfase_RimO"/>
</dbReference>
<dbReference type="InterPro" id="IPR007197">
    <property type="entry name" value="rSAM"/>
</dbReference>
<dbReference type="InterPro" id="IPR023404">
    <property type="entry name" value="rSAM_horseshoe"/>
</dbReference>
<dbReference type="InterPro" id="IPR002792">
    <property type="entry name" value="TRAM_dom"/>
</dbReference>
<dbReference type="NCBIfam" id="TIGR01125">
    <property type="entry name" value="30S ribosomal protein S12 methylthiotransferase RimO"/>
    <property type="match status" value="1"/>
</dbReference>
<dbReference type="NCBIfam" id="TIGR00089">
    <property type="entry name" value="MiaB/RimO family radical SAM methylthiotransferase"/>
    <property type="match status" value="1"/>
</dbReference>
<dbReference type="PANTHER" id="PTHR43837">
    <property type="entry name" value="RIBOSOMAL PROTEIN S12 METHYLTHIOTRANSFERASE RIMO"/>
    <property type="match status" value="1"/>
</dbReference>
<dbReference type="PANTHER" id="PTHR43837:SF1">
    <property type="entry name" value="RIBOSOMAL PROTEIN US12 METHYLTHIOTRANSFERASE RIMO"/>
    <property type="match status" value="1"/>
</dbReference>
<dbReference type="Pfam" id="PF04055">
    <property type="entry name" value="Radical_SAM"/>
    <property type="match status" value="1"/>
</dbReference>
<dbReference type="Pfam" id="PF18693">
    <property type="entry name" value="TRAM_2"/>
    <property type="match status" value="1"/>
</dbReference>
<dbReference type="Pfam" id="PF00919">
    <property type="entry name" value="UPF0004"/>
    <property type="match status" value="1"/>
</dbReference>
<dbReference type="SFLD" id="SFLDG01082">
    <property type="entry name" value="B12-binding_domain_containing"/>
    <property type="match status" value="1"/>
</dbReference>
<dbReference type="SFLD" id="SFLDG01061">
    <property type="entry name" value="methylthiotransferase"/>
    <property type="match status" value="1"/>
</dbReference>
<dbReference type="SFLD" id="SFLDF00274">
    <property type="entry name" value="ribosomal_protein_S12_methylth"/>
    <property type="match status" value="1"/>
</dbReference>
<dbReference type="SMART" id="SM00729">
    <property type="entry name" value="Elp3"/>
    <property type="match status" value="1"/>
</dbReference>
<dbReference type="SUPFAM" id="SSF102114">
    <property type="entry name" value="Radical SAM enzymes"/>
    <property type="match status" value="1"/>
</dbReference>
<dbReference type="PROSITE" id="PS51449">
    <property type="entry name" value="MTTASE_N"/>
    <property type="match status" value="1"/>
</dbReference>
<dbReference type="PROSITE" id="PS01278">
    <property type="entry name" value="MTTASE_RADICAL"/>
    <property type="match status" value="1"/>
</dbReference>
<dbReference type="PROSITE" id="PS51918">
    <property type="entry name" value="RADICAL_SAM"/>
    <property type="match status" value="1"/>
</dbReference>
<gene>
    <name evidence="1" type="primary">rimO</name>
    <name type="ordered locus">Cphamn1_0963</name>
</gene>
<feature type="chain" id="PRO_0000374767" description="Ribosomal protein uS12 methylthiotransferase RimO">
    <location>
        <begin position="1"/>
        <end position="442"/>
    </location>
</feature>
<feature type="domain" description="MTTase N-terminal" evidence="1">
    <location>
        <begin position="13"/>
        <end position="129"/>
    </location>
</feature>
<feature type="domain" description="Radical SAM core" evidence="2">
    <location>
        <begin position="139"/>
        <end position="369"/>
    </location>
</feature>
<feature type="domain" description="TRAM" evidence="1">
    <location>
        <begin position="372"/>
        <end position="439"/>
    </location>
</feature>
<feature type="binding site" evidence="1">
    <location>
        <position position="22"/>
    </location>
    <ligand>
        <name>[4Fe-4S] cluster</name>
        <dbReference type="ChEBI" id="CHEBI:49883"/>
        <label>1</label>
    </ligand>
</feature>
<feature type="binding site" evidence="1">
    <location>
        <position position="58"/>
    </location>
    <ligand>
        <name>[4Fe-4S] cluster</name>
        <dbReference type="ChEBI" id="CHEBI:49883"/>
        <label>1</label>
    </ligand>
</feature>
<feature type="binding site" evidence="1">
    <location>
        <position position="92"/>
    </location>
    <ligand>
        <name>[4Fe-4S] cluster</name>
        <dbReference type="ChEBI" id="CHEBI:49883"/>
        <label>1</label>
    </ligand>
</feature>
<feature type="binding site" evidence="1">
    <location>
        <position position="153"/>
    </location>
    <ligand>
        <name>[4Fe-4S] cluster</name>
        <dbReference type="ChEBI" id="CHEBI:49883"/>
        <label>2</label>
        <note>4Fe-4S-S-AdoMet</note>
    </ligand>
</feature>
<feature type="binding site" evidence="1">
    <location>
        <position position="157"/>
    </location>
    <ligand>
        <name>[4Fe-4S] cluster</name>
        <dbReference type="ChEBI" id="CHEBI:49883"/>
        <label>2</label>
        <note>4Fe-4S-S-AdoMet</note>
    </ligand>
</feature>
<feature type="binding site" evidence="1">
    <location>
        <position position="160"/>
    </location>
    <ligand>
        <name>[4Fe-4S] cluster</name>
        <dbReference type="ChEBI" id="CHEBI:49883"/>
        <label>2</label>
        <note>4Fe-4S-S-AdoMet</note>
    </ligand>
</feature>
<name>RIMO_CHLPB</name>
<organism>
    <name type="scientific">Chlorobium phaeobacteroides (strain BS1)</name>
    <dbReference type="NCBI Taxonomy" id="331678"/>
    <lineage>
        <taxon>Bacteria</taxon>
        <taxon>Pseudomonadati</taxon>
        <taxon>Chlorobiota</taxon>
        <taxon>Chlorobiia</taxon>
        <taxon>Chlorobiales</taxon>
        <taxon>Chlorobiaceae</taxon>
        <taxon>Chlorobium/Pelodictyon group</taxon>
        <taxon>Chlorobium</taxon>
    </lineage>
</organism>
<protein>
    <recommendedName>
        <fullName evidence="1">Ribosomal protein uS12 methylthiotransferase RimO</fullName>
        <shortName evidence="1">uS12 MTTase</shortName>
        <shortName evidence="1">uS12 methylthiotransferase</shortName>
        <ecNumber evidence="1">2.8.4.4</ecNumber>
    </recommendedName>
    <alternativeName>
        <fullName evidence="1">Ribosomal protein uS12 (aspartate-C(3))-methylthiotransferase</fullName>
    </alternativeName>
    <alternativeName>
        <fullName evidence="1">Ribosome maturation factor RimO</fullName>
    </alternativeName>
</protein>
<proteinExistence type="inferred from homology"/>
<reference key="1">
    <citation type="submission" date="2008-06" db="EMBL/GenBank/DDBJ databases">
        <title>Complete sequence of Chlorobium phaeobacteroides BS1.</title>
        <authorList>
            <consortium name="US DOE Joint Genome Institute"/>
            <person name="Lucas S."/>
            <person name="Copeland A."/>
            <person name="Lapidus A."/>
            <person name="Glavina del Rio T."/>
            <person name="Dalin E."/>
            <person name="Tice H."/>
            <person name="Bruce D."/>
            <person name="Goodwin L."/>
            <person name="Pitluck S."/>
            <person name="Schmutz J."/>
            <person name="Larimer F."/>
            <person name="Land M."/>
            <person name="Hauser L."/>
            <person name="Kyrpides N."/>
            <person name="Ovchinnikova G."/>
            <person name="Li T."/>
            <person name="Liu Z."/>
            <person name="Zhao F."/>
            <person name="Overmann J."/>
            <person name="Bryant D.A."/>
            <person name="Richardson P."/>
        </authorList>
    </citation>
    <scope>NUCLEOTIDE SEQUENCE [LARGE SCALE GENOMIC DNA]</scope>
    <source>
        <strain>BS1</strain>
    </source>
</reference>
<comment type="function">
    <text evidence="1">Catalyzes the methylthiolation of an aspartic acid residue of ribosomal protein uS12.</text>
</comment>
<comment type="catalytic activity">
    <reaction evidence="1">
        <text>L-aspartate(89)-[ribosomal protein uS12]-hydrogen + (sulfur carrier)-SH + AH2 + 2 S-adenosyl-L-methionine = 3-methylsulfanyl-L-aspartate(89)-[ribosomal protein uS12]-hydrogen + (sulfur carrier)-H + 5'-deoxyadenosine + L-methionine + A + S-adenosyl-L-homocysteine + 2 H(+)</text>
        <dbReference type="Rhea" id="RHEA:37087"/>
        <dbReference type="Rhea" id="RHEA-COMP:10460"/>
        <dbReference type="Rhea" id="RHEA-COMP:10461"/>
        <dbReference type="Rhea" id="RHEA-COMP:14737"/>
        <dbReference type="Rhea" id="RHEA-COMP:14739"/>
        <dbReference type="ChEBI" id="CHEBI:13193"/>
        <dbReference type="ChEBI" id="CHEBI:15378"/>
        <dbReference type="ChEBI" id="CHEBI:17319"/>
        <dbReference type="ChEBI" id="CHEBI:17499"/>
        <dbReference type="ChEBI" id="CHEBI:29917"/>
        <dbReference type="ChEBI" id="CHEBI:29961"/>
        <dbReference type="ChEBI" id="CHEBI:57844"/>
        <dbReference type="ChEBI" id="CHEBI:57856"/>
        <dbReference type="ChEBI" id="CHEBI:59789"/>
        <dbReference type="ChEBI" id="CHEBI:64428"/>
        <dbReference type="ChEBI" id="CHEBI:73599"/>
        <dbReference type="EC" id="2.8.4.4"/>
    </reaction>
</comment>
<comment type="cofactor">
    <cofactor evidence="1">
        <name>[4Fe-4S] cluster</name>
        <dbReference type="ChEBI" id="CHEBI:49883"/>
    </cofactor>
    <text evidence="1">Binds 2 [4Fe-4S] clusters. One cluster is coordinated with 3 cysteines and an exchangeable S-adenosyl-L-methionine.</text>
</comment>
<comment type="subcellular location">
    <subcellularLocation>
        <location evidence="1">Cytoplasm</location>
    </subcellularLocation>
</comment>
<comment type="similarity">
    <text evidence="1">Belongs to the methylthiotransferase family. RimO subfamily.</text>
</comment>